<accession>Q6MBM7</accession>
<gene>
    <name evidence="1" type="primary">sucC</name>
    <name type="ordered locus">pc1298</name>
</gene>
<comment type="function">
    <text evidence="1">Succinyl-CoA synthetase functions in the citric acid cycle (TCA), coupling the hydrolysis of succinyl-CoA to the synthesis of either ATP or GTP and thus represents the only step of substrate-level phosphorylation in the TCA. The beta subunit provides nucleotide specificity of the enzyme and binds the substrate succinate, while the binding sites for coenzyme A and phosphate are found in the alpha subunit.</text>
</comment>
<comment type="catalytic activity">
    <reaction evidence="1">
        <text>succinate + ATP + CoA = succinyl-CoA + ADP + phosphate</text>
        <dbReference type="Rhea" id="RHEA:17661"/>
        <dbReference type="ChEBI" id="CHEBI:30031"/>
        <dbReference type="ChEBI" id="CHEBI:30616"/>
        <dbReference type="ChEBI" id="CHEBI:43474"/>
        <dbReference type="ChEBI" id="CHEBI:57287"/>
        <dbReference type="ChEBI" id="CHEBI:57292"/>
        <dbReference type="ChEBI" id="CHEBI:456216"/>
        <dbReference type="EC" id="6.2.1.5"/>
    </reaction>
    <physiologicalReaction direction="right-to-left" evidence="1">
        <dbReference type="Rhea" id="RHEA:17663"/>
    </physiologicalReaction>
</comment>
<comment type="catalytic activity">
    <reaction evidence="1">
        <text>GTP + succinate + CoA = succinyl-CoA + GDP + phosphate</text>
        <dbReference type="Rhea" id="RHEA:22120"/>
        <dbReference type="ChEBI" id="CHEBI:30031"/>
        <dbReference type="ChEBI" id="CHEBI:37565"/>
        <dbReference type="ChEBI" id="CHEBI:43474"/>
        <dbReference type="ChEBI" id="CHEBI:57287"/>
        <dbReference type="ChEBI" id="CHEBI:57292"/>
        <dbReference type="ChEBI" id="CHEBI:58189"/>
    </reaction>
    <physiologicalReaction direction="right-to-left" evidence="1">
        <dbReference type="Rhea" id="RHEA:22122"/>
    </physiologicalReaction>
</comment>
<comment type="cofactor">
    <cofactor evidence="1">
        <name>Mg(2+)</name>
        <dbReference type="ChEBI" id="CHEBI:18420"/>
    </cofactor>
    <text evidence="1">Binds 1 Mg(2+) ion per subunit.</text>
</comment>
<comment type="pathway">
    <text evidence="1">Carbohydrate metabolism; tricarboxylic acid cycle; succinate from succinyl-CoA (ligase route): step 1/1.</text>
</comment>
<comment type="subunit">
    <text evidence="1">Heterotetramer of two alpha and two beta subunits.</text>
</comment>
<comment type="similarity">
    <text evidence="1">Belongs to the succinate/malate CoA ligase beta subunit family.</text>
</comment>
<evidence type="ECO:0000255" key="1">
    <source>
        <dbReference type="HAMAP-Rule" id="MF_00558"/>
    </source>
</evidence>
<proteinExistence type="inferred from homology"/>
<name>SUCC_PARUW</name>
<dbReference type="EC" id="6.2.1.5" evidence="1"/>
<dbReference type="EMBL" id="BX908798">
    <property type="protein sequence ID" value="CAF24022.1"/>
    <property type="molecule type" value="Genomic_DNA"/>
</dbReference>
<dbReference type="RefSeq" id="WP_011175847.1">
    <property type="nucleotide sequence ID" value="NC_005861.2"/>
</dbReference>
<dbReference type="SMR" id="Q6MBM7"/>
<dbReference type="STRING" id="264201.pc1298"/>
<dbReference type="KEGG" id="pcu:PC_RS06245"/>
<dbReference type="eggNOG" id="COG0045">
    <property type="taxonomic scope" value="Bacteria"/>
</dbReference>
<dbReference type="HOGENOM" id="CLU_037430_0_0_0"/>
<dbReference type="OrthoDB" id="9802602at2"/>
<dbReference type="UniPathway" id="UPA00223">
    <property type="reaction ID" value="UER00999"/>
</dbReference>
<dbReference type="Proteomes" id="UP000000529">
    <property type="component" value="Chromosome"/>
</dbReference>
<dbReference type="GO" id="GO:0005829">
    <property type="term" value="C:cytosol"/>
    <property type="evidence" value="ECO:0007669"/>
    <property type="project" value="TreeGrafter"/>
</dbReference>
<dbReference type="GO" id="GO:0042709">
    <property type="term" value="C:succinate-CoA ligase complex"/>
    <property type="evidence" value="ECO:0007669"/>
    <property type="project" value="TreeGrafter"/>
</dbReference>
<dbReference type="GO" id="GO:0005524">
    <property type="term" value="F:ATP binding"/>
    <property type="evidence" value="ECO:0007669"/>
    <property type="project" value="UniProtKB-UniRule"/>
</dbReference>
<dbReference type="GO" id="GO:0000287">
    <property type="term" value="F:magnesium ion binding"/>
    <property type="evidence" value="ECO:0007669"/>
    <property type="project" value="UniProtKB-UniRule"/>
</dbReference>
<dbReference type="GO" id="GO:0004775">
    <property type="term" value="F:succinate-CoA ligase (ADP-forming) activity"/>
    <property type="evidence" value="ECO:0007669"/>
    <property type="project" value="UniProtKB-UniRule"/>
</dbReference>
<dbReference type="GO" id="GO:0004776">
    <property type="term" value="F:succinate-CoA ligase (GDP-forming) activity"/>
    <property type="evidence" value="ECO:0007669"/>
    <property type="project" value="RHEA"/>
</dbReference>
<dbReference type="GO" id="GO:0006104">
    <property type="term" value="P:succinyl-CoA metabolic process"/>
    <property type="evidence" value="ECO:0007669"/>
    <property type="project" value="TreeGrafter"/>
</dbReference>
<dbReference type="GO" id="GO:0006099">
    <property type="term" value="P:tricarboxylic acid cycle"/>
    <property type="evidence" value="ECO:0007669"/>
    <property type="project" value="UniProtKB-UniRule"/>
</dbReference>
<dbReference type="FunFam" id="3.30.470.20:FF:000002">
    <property type="entry name" value="Succinate--CoA ligase [ADP-forming] subunit beta"/>
    <property type="match status" value="1"/>
</dbReference>
<dbReference type="FunFam" id="3.40.50.261:FF:000001">
    <property type="entry name" value="Succinate--CoA ligase [ADP-forming] subunit beta"/>
    <property type="match status" value="1"/>
</dbReference>
<dbReference type="Gene3D" id="3.30.1490.20">
    <property type="entry name" value="ATP-grasp fold, A domain"/>
    <property type="match status" value="1"/>
</dbReference>
<dbReference type="Gene3D" id="3.30.470.20">
    <property type="entry name" value="ATP-grasp fold, B domain"/>
    <property type="match status" value="1"/>
</dbReference>
<dbReference type="Gene3D" id="3.40.50.261">
    <property type="entry name" value="Succinyl-CoA synthetase domains"/>
    <property type="match status" value="1"/>
</dbReference>
<dbReference type="HAMAP" id="MF_00558">
    <property type="entry name" value="Succ_CoA_beta"/>
    <property type="match status" value="1"/>
</dbReference>
<dbReference type="InterPro" id="IPR011761">
    <property type="entry name" value="ATP-grasp"/>
</dbReference>
<dbReference type="InterPro" id="IPR013650">
    <property type="entry name" value="ATP-grasp_succ-CoA_synth-type"/>
</dbReference>
<dbReference type="InterPro" id="IPR013815">
    <property type="entry name" value="ATP_grasp_subdomain_1"/>
</dbReference>
<dbReference type="InterPro" id="IPR017866">
    <property type="entry name" value="Succ-CoA_synthase_bsu_CS"/>
</dbReference>
<dbReference type="InterPro" id="IPR005811">
    <property type="entry name" value="SUCC_ACL_C"/>
</dbReference>
<dbReference type="InterPro" id="IPR005809">
    <property type="entry name" value="Succ_CoA_ligase-like_bsu"/>
</dbReference>
<dbReference type="InterPro" id="IPR016102">
    <property type="entry name" value="Succinyl-CoA_synth-like"/>
</dbReference>
<dbReference type="NCBIfam" id="NF001913">
    <property type="entry name" value="PRK00696.1"/>
    <property type="match status" value="1"/>
</dbReference>
<dbReference type="NCBIfam" id="TIGR01016">
    <property type="entry name" value="sucCoAbeta"/>
    <property type="match status" value="1"/>
</dbReference>
<dbReference type="PANTHER" id="PTHR11815:SF10">
    <property type="entry name" value="SUCCINATE--COA LIGASE [GDP-FORMING] SUBUNIT BETA, MITOCHONDRIAL"/>
    <property type="match status" value="1"/>
</dbReference>
<dbReference type="PANTHER" id="PTHR11815">
    <property type="entry name" value="SUCCINYL-COA SYNTHETASE BETA CHAIN"/>
    <property type="match status" value="1"/>
</dbReference>
<dbReference type="Pfam" id="PF08442">
    <property type="entry name" value="ATP-grasp_2"/>
    <property type="match status" value="1"/>
</dbReference>
<dbReference type="Pfam" id="PF00549">
    <property type="entry name" value="Ligase_CoA"/>
    <property type="match status" value="1"/>
</dbReference>
<dbReference type="PIRSF" id="PIRSF001554">
    <property type="entry name" value="SucCS_beta"/>
    <property type="match status" value="1"/>
</dbReference>
<dbReference type="SUPFAM" id="SSF56059">
    <property type="entry name" value="Glutathione synthetase ATP-binding domain-like"/>
    <property type="match status" value="1"/>
</dbReference>
<dbReference type="SUPFAM" id="SSF52210">
    <property type="entry name" value="Succinyl-CoA synthetase domains"/>
    <property type="match status" value="1"/>
</dbReference>
<dbReference type="PROSITE" id="PS50975">
    <property type="entry name" value="ATP_GRASP"/>
    <property type="match status" value="1"/>
</dbReference>
<dbReference type="PROSITE" id="PS01217">
    <property type="entry name" value="SUCCINYL_COA_LIG_3"/>
    <property type="match status" value="1"/>
</dbReference>
<keyword id="KW-0067">ATP-binding</keyword>
<keyword id="KW-0436">Ligase</keyword>
<keyword id="KW-0460">Magnesium</keyword>
<keyword id="KW-0479">Metal-binding</keyword>
<keyword id="KW-0547">Nucleotide-binding</keyword>
<keyword id="KW-1185">Reference proteome</keyword>
<keyword id="KW-0816">Tricarboxylic acid cycle</keyword>
<protein>
    <recommendedName>
        <fullName evidence="1">Succinate--CoA ligase [ADP-forming] subunit beta</fullName>
        <ecNumber evidence="1">6.2.1.5</ecNumber>
    </recommendedName>
    <alternativeName>
        <fullName evidence="1">Succinyl-CoA synthetase subunit beta</fullName>
        <shortName evidence="1">SCS-beta</shortName>
    </alternativeName>
</protein>
<reference key="1">
    <citation type="journal article" date="2004" name="Science">
        <title>Illuminating the evolutionary history of chlamydiae.</title>
        <authorList>
            <person name="Horn M."/>
            <person name="Collingro A."/>
            <person name="Schmitz-Esser S."/>
            <person name="Beier C.L."/>
            <person name="Purkhold U."/>
            <person name="Fartmann B."/>
            <person name="Brandt P."/>
            <person name="Nyakatura G.J."/>
            <person name="Droege M."/>
            <person name="Frishman D."/>
            <person name="Rattei T."/>
            <person name="Mewes H.-W."/>
            <person name="Wagner M."/>
        </authorList>
    </citation>
    <scope>NUCLEOTIDE SEQUENCE [LARGE SCALE GENOMIC DNA]</scope>
    <source>
        <strain>UWE25</strain>
    </source>
</reference>
<organism>
    <name type="scientific">Protochlamydia amoebophila (strain UWE25)</name>
    <dbReference type="NCBI Taxonomy" id="264201"/>
    <lineage>
        <taxon>Bacteria</taxon>
        <taxon>Pseudomonadati</taxon>
        <taxon>Chlamydiota</taxon>
        <taxon>Chlamydiia</taxon>
        <taxon>Parachlamydiales</taxon>
        <taxon>Parachlamydiaceae</taxon>
        <taxon>Candidatus Protochlamydia</taxon>
    </lineage>
</organism>
<feature type="chain" id="PRO_1000082151" description="Succinate--CoA ligase [ADP-forming] subunit beta">
    <location>
        <begin position="1"/>
        <end position="389"/>
    </location>
</feature>
<feature type="domain" description="ATP-grasp" evidence="1">
    <location>
        <begin position="9"/>
        <end position="244"/>
    </location>
</feature>
<feature type="binding site" evidence="1">
    <location>
        <position position="46"/>
    </location>
    <ligand>
        <name>ATP</name>
        <dbReference type="ChEBI" id="CHEBI:30616"/>
    </ligand>
</feature>
<feature type="binding site" evidence="1">
    <location>
        <begin position="53"/>
        <end position="55"/>
    </location>
    <ligand>
        <name>ATP</name>
        <dbReference type="ChEBI" id="CHEBI:30616"/>
    </ligand>
</feature>
<feature type="binding site" evidence="1">
    <location>
        <position position="102"/>
    </location>
    <ligand>
        <name>ATP</name>
        <dbReference type="ChEBI" id="CHEBI:30616"/>
    </ligand>
</feature>
<feature type="binding site" evidence="1">
    <location>
        <position position="107"/>
    </location>
    <ligand>
        <name>ATP</name>
        <dbReference type="ChEBI" id="CHEBI:30616"/>
    </ligand>
</feature>
<feature type="binding site" evidence="1">
    <location>
        <position position="199"/>
    </location>
    <ligand>
        <name>Mg(2+)</name>
        <dbReference type="ChEBI" id="CHEBI:18420"/>
    </ligand>
</feature>
<feature type="binding site" evidence="1">
    <location>
        <position position="213"/>
    </location>
    <ligand>
        <name>Mg(2+)</name>
        <dbReference type="ChEBI" id="CHEBI:18420"/>
    </ligand>
</feature>
<feature type="binding site" evidence="1">
    <location>
        <position position="264"/>
    </location>
    <ligand>
        <name>substrate</name>
        <note>ligand shared with subunit alpha</note>
    </ligand>
</feature>
<feature type="binding site" evidence="1">
    <location>
        <begin position="321"/>
        <end position="323"/>
    </location>
    <ligand>
        <name>substrate</name>
        <note>ligand shared with subunit alpha</note>
    </ligand>
</feature>
<sequence length="389" mass="42507">MNTHEFQAKQILRKYGIPVPDFYIASSSKEVEEIIKQYQLQSAIIKVQVHAGGRGKAGGVKLATNPQEILEFSQELIGKKIINEQTGPSGMISHQVLISPAILIKKEFYLGITINRELASRVLIASPIGGVNIEKIAHEQPNQLLMLPIPLEETFRSYHLIRIASFMGWKGKQIQEGVAIIQSLVKAFKETDASLLEINPLVETKEGHLLALDAKLSIDDNALFKHEDLKTLFDPSQMSNNEARAQQFELAYVALEGEIGCMVNGAGLAMATMDLIQYHGGRPANFLDVGGGASQVKVAEGFRIILSDSNVKAILINIFGGIMNCETLASGIIEAAKGLQIHIPLIVRMEGTNVEKGKQLLQQSGLKILITENLTEAAQQAVQLAQSVR</sequence>